<keyword id="KW-0013">ADP-ribosylation</keyword>
<keyword id="KW-1040">Host Golgi apparatus</keyword>
<keyword id="KW-0597">Phosphoprotein</keyword>
<keyword id="KW-0687">Ribonucleoprotein</keyword>
<keyword id="KW-0694">RNA-binding</keyword>
<keyword id="KW-0804">Transcription</keyword>
<keyword id="KW-0805">Transcription regulation</keyword>
<keyword id="KW-0543">Viral nucleoprotein</keyword>
<keyword id="KW-0946">Virion</keyword>
<evidence type="ECO:0000250" key="1">
    <source>
        <dbReference type="UniProtKB" id="P0DTC9"/>
    </source>
</evidence>
<evidence type="ECO:0000255" key="2">
    <source>
        <dbReference type="HAMAP-Rule" id="MF_04096"/>
    </source>
</evidence>
<evidence type="ECO:0000255" key="3">
    <source>
        <dbReference type="PROSITE-ProRule" id="PRU01276"/>
    </source>
</evidence>
<evidence type="ECO:0000255" key="4">
    <source>
        <dbReference type="PROSITE-ProRule" id="PRU01277"/>
    </source>
</evidence>
<evidence type="ECO:0000256" key="5">
    <source>
        <dbReference type="SAM" id="MobiDB-lite"/>
    </source>
</evidence>
<dbReference type="EMBL" id="DQ022305">
    <property type="protein sequence ID" value="AAY88874.1"/>
    <property type="molecule type" value="Genomic_RNA"/>
</dbReference>
<dbReference type="BMRB" id="Q3LZX4"/>
<dbReference type="SMR" id="Q3LZX4"/>
<dbReference type="Proteomes" id="UP000007450">
    <property type="component" value="Segment"/>
</dbReference>
<dbReference type="GO" id="GO:0044172">
    <property type="term" value="C:host cell endoplasmic reticulum-Golgi intermediate compartment"/>
    <property type="evidence" value="ECO:0007669"/>
    <property type="project" value="UniProtKB-SubCell"/>
</dbReference>
<dbReference type="GO" id="GO:0044177">
    <property type="term" value="C:host cell Golgi apparatus"/>
    <property type="evidence" value="ECO:0007669"/>
    <property type="project" value="UniProtKB-SubCell"/>
</dbReference>
<dbReference type="GO" id="GO:1990904">
    <property type="term" value="C:ribonucleoprotein complex"/>
    <property type="evidence" value="ECO:0007669"/>
    <property type="project" value="UniProtKB-KW"/>
</dbReference>
<dbReference type="GO" id="GO:0019013">
    <property type="term" value="C:viral nucleocapsid"/>
    <property type="evidence" value="ECO:0007669"/>
    <property type="project" value="UniProtKB-UniRule"/>
</dbReference>
<dbReference type="GO" id="GO:0003723">
    <property type="term" value="F:RNA binding"/>
    <property type="evidence" value="ECO:0007669"/>
    <property type="project" value="UniProtKB-UniRule"/>
</dbReference>
<dbReference type="CDD" id="cd21595">
    <property type="entry name" value="CoV_N-CTD"/>
    <property type="match status" value="1"/>
</dbReference>
<dbReference type="CDD" id="cd21554">
    <property type="entry name" value="CoV_N-NTD"/>
    <property type="match status" value="1"/>
</dbReference>
<dbReference type="HAMAP" id="MF_04096">
    <property type="entry name" value="BETA_CORONA_NCAP"/>
    <property type="match status" value="1"/>
</dbReference>
<dbReference type="InterPro" id="IPR044344">
    <property type="entry name" value="N_prot_C_CoV"/>
</dbReference>
<dbReference type="InterPro" id="IPR044345">
    <property type="entry name" value="N_prot_N_CoV"/>
</dbReference>
<dbReference type="InterPro" id="IPR043505">
    <property type="entry name" value="NCAP_bCoV"/>
</dbReference>
<dbReference type="InterPro" id="IPR001218">
    <property type="entry name" value="Nucleocap_CoV"/>
</dbReference>
<dbReference type="InterPro" id="IPR037179">
    <property type="entry name" value="Nucleocapsid_C"/>
</dbReference>
<dbReference type="InterPro" id="IPR037195">
    <property type="entry name" value="Nucleocapsid_N"/>
</dbReference>
<dbReference type="Pfam" id="PF00937">
    <property type="entry name" value="CoV_nucleocap"/>
    <property type="match status" value="1"/>
</dbReference>
<dbReference type="PIRSF" id="PIRSF003888">
    <property type="entry name" value="Corona_nucleocap"/>
    <property type="match status" value="1"/>
</dbReference>
<dbReference type="SUPFAM" id="SSF110304">
    <property type="entry name" value="Coronavirus RNA-binding domain"/>
    <property type="match status" value="1"/>
</dbReference>
<dbReference type="SUPFAM" id="SSF103068">
    <property type="entry name" value="Nucleocapsid protein dimerization domain"/>
    <property type="match status" value="1"/>
</dbReference>
<dbReference type="PROSITE" id="PS51929">
    <property type="entry name" value="COV_N_CTD"/>
    <property type="match status" value="1"/>
</dbReference>
<dbReference type="PROSITE" id="PS51928">
    <property type="entry name" value="COV_N_NTD"/>
    <property type="match status" value="1"/>
</dbReference>
<feature type="chain" id="PRO_0000291326" description="Nucleoprotein">
    <location>
        <begin position="1"/>
        <end position="421"/>
    </location>
</feature>
<feature type="domain" description="CoV N NTD" evidence="3">
    <location>
        <begin position="48"/>
        <end position="175"/>
    </location>
</feature>
<feature type="domain" description="CoV N CTD" evidence="4">
    <location>
        <begin position="247"/>
        <end position="364"/>
    </location>
</feature>
<feature type="region of interest" description="Disordered" evidence="5">
    <location>
        <begin position="1"/>
        <end position="50"/>
    </location>
</feature>
<feature type="region of interest" description="RNA-binding" evidence="2">
    <location>
        <begin position="41"/>
        <end position="186"/>
    </location>
</feature>
<feature type="region of interest" description="Disordered" evidence="5">
    <location>
        <begin position="63"/>
        <end position="82"/>
    </location>
</feature>
<feature type="region of interest" description="Disordered" evidence="5">
    <location>
        <begin position="168"/>
        <end position="212"/>
    </location>
</feature>
<feature type="region of interest" description="Disordered" evidence="5">
    <location>
        <begin position="233"/>
        <end position="271"/>
    </location>
</feature>
<feature type="region of interest" description="Dimerization" evidence="2">
    <location>
        <begin position="258"/>
        <end position="361"/>
    </location>
</feature>
<feature type="region of interest" description="Disordered" evidence="5">
    <location>
        <begin position="361"/>
        <end position="421"/>
    </location>
</feature>
<feature type="compositionally biased region" description="Polar residues" evidence="5">
    <location>
        <begin position="1"/>
        <end position="11"/>
    </location>
</feature>
<feature type="compositionally biased region" description="Low complexity" evidence="5">
    <location>
        <begin position="179"/>
        <end position="212"/>
    </location>
</feature>
<feature type="compositionally biased region" description="Polar residues" evidence="5">
    <location>
        <begin position="237"/>
        <end position="248"/>
    </location>
</feature>
<feature type="compositionally biased region" description="Basic and acidic residues" evidence="5">
    <location>
        <begin position="367"/>
        <end position="378"/>
    </location>
</feature>
<feature type="compositionally biased region" description="Polar residues" evidence="5">
    <location>
        <begin position="405"/>
        <end position="421"/>
    </location>
</feature>
<feature type="binding site" evidence="1">
    <location>
        <position position="92"/>
    </location>
    <ligand>
        <name>RNA</name>
        <dbReference type="ChEBI" id="CHEBI:33697"/>
    </ligand>
</feature>
<feature type="binding site" evidence="1">
    <location>
        <position position="107"/>
    </location>
    <ligand>
        <name>RNA</name>
        <dbReference type="ChEBI" id="CHEBI:33697"/>
    </ligand>
</feature>
<feature type="binding site" evidence="1">
    <location>
        <position position="149"/>
    </location>
    <ligand>
        <name>RNA</name>
        <dbReference type="ChEBI" id="CHEBI:33697"/>
    </ligand>
</feature>
<feature type="modified residue" description="Phosphoserine; by host" evidence="2">
    <location>
        <position position="176"/>
    </location>
</feature>
<name>NCAP_BCHK3</name>
<comment type="function">
    <text evidence="2">Packages the positive strand viral genome RNA into a helical ribonucleocapsid (RNP) and plays a fundamental role during virion assembly through its interactions with the viral genome and membrane protein M. Plays an important role in enhancing the efficiency of subgenomic viral RNA transcription as well as viral replication.</text>
</comment>
<comment type="subunit">
    <text evidence="2">Homooligomer. Both monomeric and oligomeric forms interact with RNA. Interacts with protein M. Interacts with NSP3; this interaction serves to tether the genome to the newly translated replicase-transcriptase complex at a very early stage of infection.</text>
</comment>
<comment type="subcellular location">
    <subcellularLocation>
        <location evidence="2">Virion</location>
    </subcellularLocation>
    <subcellularLocation>
        <location evidence="2">Host endoplasmic reticulum-Golgi intermediate compartment</location>
    </subcellularLocation>
    <subcellularLocation>
        <location evidence="2">Host Golgi apparatus</location>
    </subcellularLocation>
    <text evidence="2">Located inside the virion, complexed with the viral RNA. Probably associates with ER-derived membranes where it participates in viral RNA synthesis and virus budding.</text>
</comment>
<comment type="PTM">
    <text evidence="2">ADP-ribosylated. The ADP-ribosylation is retained in the virion during infection.</text>
</comment>
<comment type="PTM">
    <text evidence="2">Phosphorylated on serine and threonine residues.</text>
</comment>
<comment type="similarity">
    <text evidence="2">Belongs to the betacoronavirus nucleocapsid protein family.</text>
</comment>
<sequence length="421" mass="45900">MSDNGPQSQRSAPRITFGGPADSNDNNQDGGRSGARPKQRRPQGLPNNTASWFTALTQHGKEELRFPRGQGVPINTNSGKDDQIGYYRRATRRVRGGDGKMKELSPRWYFYYLGTGPEASLPYGANKEGIVWVATEGALNTPKDHIGTRNPNNNAAIVLQLPQGTTLPKGFYAEGSRGGSQSSSRSSSRSRGNSRNSTPGSSRGSSPARLASGGGETALALLLLDRLNQLESKVSGKGQQQPGQTVTKKSAAEASKKPRQKRTATKQYNVTQAFGRRGPEQTQGNFGDQELIRQGIDYKHWPQIAQFAPSASAFFGMSRIGMEVTPSGTWLTYHGAIKLDDKDPQFKDNVILLNKHIDAYKTFPPTEPKKDKKKKTDEAQPLPQRQKKQPTVTLLPAADMDDFSRQLQHSMSGASADSTQA</sequence>
<organismHost>
    <name type="scientific">Rhinolophus sinicus</name>
    <name type="common">Chinese rufous horseshoe bat</name>
    <dbReference type="NCBI Taxonomy" id="89399"/>
</organismHost>
<organism>
    <name type="scientific">Bat coronavirus HKU3</name>
    <name type="common">BtCoV</name>
    <name type="synonym">SARS-like coronavirus HKU3</name>
    <dbReference type="NCBI Taxonomy" id="442736"/>
    <lineage>
        <taxon>Viruses</taxon>
        <taxon>Riboviria</taxon>
        <taxon>Orthornavirae</taxon>
        <taxon>Pisuviricota</taxon>
        <taxon>Pisoniviricetes</taxon>
        <taxon>Nidovirales</taxon>
        <taxon>Cornidovirineae</taxon>
        <taxon>Coronaviridae</taxon>
        <taxon>Orthocoronavirinae</taxon>
        <taxon>Betacoronavirus</taxon>
        <taxon>Sarbecovirus</taxon>
        <taxon>Severe acute respiratory syndrome coronavirus</taxon>
    </lineage>
</organism>
<protein>
    <recommendedName>
        <fullName evidence="2">Nucleoprotein</fullName>
    </recommendedName>
    <alternativeName>
        <fullName evidence="2">Nucleocapsid protein</fullName>
        <shortName evidence="2">NC</shortName>
        <shortName evidence="2">Protein N</shortName>
    </alternativeName>
</protein>
<reference key="1">
    <citation type="journal article" date="2005" name="Proc. Natl. Acad. Sci. U.S.A.">
        <title>Severe acute respiratory syndrome coronavirus-like virus in Chinese horseshoe bats.</title>
        <authorList>
            <person name="Lau S.K.P."/>
            <person name="Woo P.C.Y."/>
            <person name="Li K.S.M."/>
            <person name="Huang Y."/>
            <person name="Tsoi H.-W."/>
            <person name="Wong B.H.L."/>
            <person name="Wong S.S.Y."/>
            <person name="Leung S.-Y."/>
            <person name="Chan K.-H."/>
            <person name="Yuen K.-Y."/>
        </authorList>
    </citation>
    <scope>NUCLEOTIDE SEQUENCE [GENOMIC RNA]</scope>
    <source>
        <strain>Isolate HKU3-1</strain>
    </source>
</reference>
<accession>Q3LZX4</accession>
<gene>
    <name evidence="2" type="primary">N</name>
    <name type="ORF">9a</name>
</gene>
<proteinExistence type="inferred from homology"/>